<name>SET23_CAEBR</name>
<feature type="chain" id="PRO_0000398792" description="Probable histone-lysine N-methyltransferase set-23">
    <location>
        <begin position="1"/>
        <end position="241"/>
    </location>
</feature>
<feature type="domain" description="Pre-SET" evidence="5">
    <location>
        <begin position="25"/>
        <end position="85"/>
    </location>
</feature>
<feature type="domain" description="SET" evidence="6">
    <location>
        <begin position="88"/>
        <end position="210"/>
    </location>
</feature>
<feature type="domain" description="Post-SET" evidence="4">
    <location>
        <begin position="218"/>
        <end position="234"/>
    </location>
</feature>
<feature type="binding site" evidence="1">
    <location>
        <position position="27"/>
    </location>
    <ligand>
        <name>Zn(2+)</name>
        <dbReference type="ChEBI" id="CHEBI:29105"/>
        <label>1</label>
    </ligand>
</feature>
<feature type="binding site" evidence="1">
    <location>
        <position position="27"/>
    </location>
    <ligand>
        <name>Zn(2+)</name>
        <dbReference type="ChEBI" id="CHEBI:29105"/>
        <label>2</label>
    </ligand>
</feature>
<feature type="binding site" evidence="1">
    <location>
        <position position="29"/>
    </location>
    <ligand>
        <name>Zn(2+)</name>
        <dbReference type="ChEBI" id="CHEBI:29105"/>
        <label>1</label>
    </ligand>
</feature>
<feature type="binding site" evidence="1">
    <location>
        <position position="33"/>
    </location>
    <ligand>
        <name>Zn(2+)</name>
        <dbReference type="ChEBI" id="CHEBI:29105"/>
        <label>1</label>
    </ligand>
</feature>
<feature type="binding site" evidence="1">
    <location>
        <position position="33"/>
    </location>
    <ligand>
        <name>Zn(2+)</name>
        <dbReference type="ChEBI" id="CHEBI:29105"/>
        <label>3</label>
    </ligand>
</feature>
<feature type="binding site" evidence="1">
    <location>
        <position position="39"/>
    </location>
    <ligand>
        <name>Zn(2+)</name>
        <dbReference type="ChEBI" id="CHEBI:29105"/>
        <label>1</label>
    </ligand>
</feature>
<feature type="binding site" evidence="1">
    <location>
        <position position="41"/>
    </location>
    <ligand>
        <name>Zn(2+)</name>
        <dbReference type="ChEBI" id="CHEBI:29105"/>
        <label>2</label>
    </ligand>
</feature>
<feature type="binding site" evidence="1">
    <location>
        <position position="64"/>
    </location>
    <ligand>
        <name>Zn(2+)</name>
        <dbReference type="ChEBI" id="CHEBI:29105"/>
        <label>2</label>
    </ligand>
</feature>
<feature type="binding site" evidence="1">
    <location>
        <position position="64"/>
    </location>
    <ligand>
        <name>Zn(2+)</name>
        <dbReference type="ChEBI" id="CHEBI:29105"/>
        <label>3</label>
    </ligand>
</feature>
<feature type="binding site" evidence="1">
    <location>
        <position position="68"/>
    </location>
    <ligand>
        <name>Zn(2+)</name>
        <dbReference type="ChEBI" id="CHEBI:29105"/>
        <label>2</label>
    </ligand>
</feature>
<feature type="binding site" evidence="1">
    <location>
        <position position="70"/>
    </location>
    <ligand>
        <name>Zn(2+)</name>
        <dbReference type="ChEBI" id="CHEBI:29105"/>
        <label>3</label>
    </ligand>
</feature>
<feature type="binding site" evidence="1">
    <location>
        <position position="77"/>
    </location>
    <ligand>
        <name>Zn(2+)</name>
        <dbReference type="ChEBI" id="CHEBI:29105"/>
        <label>3</label>
    </ligand>
</feature>
<feature type="binding site" evidence="1">
    <location>
        <begin position="98"/>
        <end position="100"/>
    </location>
    <ligand>
        <name>S-adenosyl-L-methionine</name>
        <dbReference type="ChEBI" id="CHEBI:59789"/>
    </ligand>
</feature>
<feature type="binding site" evidence="6">
    <location>
        <position position="138"/>
    </location>
    <ligand>
        <name>S-adenosyl-L-methionine</name>
        <dbReference type="ChEBI" id="CHEBI:59789"/>
    </ligand>
</feature>
<feature type="binding site" evidence="6">
    <location>
        <position position="140"/>
    </location>
    <ligand>
        <name>S-adenosyl-L-methionine</name>
        <dbReference type="ChEBI" id="CHEBI:59789"/>
    </ligand>
</feature>
<feature type="binding site" evidence="6">
    <location>
        <position position="167"/>
    </location>
    <ligand>
        <name>S-adenosyl-L-methionine</name>
        <dbReference type="ChEBI" id="CHEBI:59789"/>
    </ligand>
</feature>
<feature type="binding site" evidence="1">
    <location>
        <begin position="170"/>
        <end position="171"/>
    </location>
    <ligand>
        <name>S-adenosyl-L-methionine</name>
        <dbReference type="ChEBI" id="CHEBI:59789"/>
    </ligand>
</feature>
<feature type="binding site" evidence="1">
    <location>
        <position position="173"/>
    </location>
    <ligand>
        <name>Zn(2+)</name>
        <dbReference type="ChEBI" id="CHEBI:29105"/>
        <label>4</label>
    </ligand>
</feature>
<feature type="binding site" evidence="1">
    <location>
        <position position="222"/>
    </location>
    <ligand>
        <name>Zn(2+)</name>
        <dbReference type="ChEBI" id="CHEBI:29105"/>
        <label>4</label>
    </ligand>
</feature>
<feature type="binding site" evidence="1">
    <location>
        <position position="224"/>
    </location>
    <ligand>
        <name>Zn(2+)</name>
        <dbReference type="ChEBI" id="CHEBI:29105"/>
        <label>4</label>
    </ligand>
</feature>
<feature type="binding site" evidence="1">
    <location>
        <position position="229"/>
    </location>
    <ligand>
        <name>Zn(2+)</name>
        <dbReference type="ChEBI" id="CHEBI:29105"/>
        <label>4</label>
    </ligand>
</feature>
<evidence type="ECO:0000250" key="1"/>
<evidence type="ECO:0000250" key="2">
    <source>
        <dbReference type="UniProtKB" id="Q95Y12"/>
    </source>
</evidence>
<evidence type="ECO:0000250" key="3">
    <source>
        <dbReference type="UniProtKB" id="Q9Z148"/>
    </source>
</evidence>
<evidence type="ECO:0000255" key="4">
    <source>
        <dbReference type="PROSITE-ProRule" id="PRU00155"/>
    </source>
</evidence>
<evidence type="ECO:0000255" key="5">
    <source>
        <dbReference type="PROSITE-ProRule" id="PRU00157"/>
    </source>
</evidence>
<evidence type="ECO:0000255" key="6">
    <source>
        <dbReference type="PROSITE-ProRule" id="PRU00190"/>
    </source>
</evidence>
<evidence type="ECO:0000305" key="7"/>
<evidence type="ECO:0000312" key="8">
    <source>
        <dbReference type="EMBL" id="CAP32349.1"/>
    </source>
</evidence>
<evidence type="ECO:0000312" key="9">
    <source>
        <dbReference type="WormBase" id="CBG13569"/>
    </source>
</evidence>
<organism>
    <name type="scientific">Caenorhabditis briggsae</name>
    <dbReference type="NCBI Taxonomy" id="6238"/>
    <lineage>
        <taxon>Eukaryota</taxon>
        <taxon>Metazoa</taxon>
        <taxon>Ecdysozoa</taxon>
        <taxon>Nematoda</taxon>
        <taxon>Chromadorea</taxon>
        <taxon>Rhabditida</taxon>
        <taxon>Rhabditina</taxon>
        <taxon>Rhabditomorpha</taxon>
        <taxon>Rhabditoidea</taxon>
        <taxon>Rhabditidae</taxon>
        <taxon>Peloderinae</taxon>
        <taxon>Caenorhabditis</taxon>
    </lineage>
</organism>
<reference evidence="8" key="1">
    <citation type="journal article" date="2003" name="PLoS Biol.">
        <title>The genome sequence of Caenorhabditis briggsae: a platform for comparative genomics.</title>
        <authorList>
            <person name="Stein L.D."/>
            <person name="Bao Z."/>
            <person name="Blasiar D."/>
            <person name="Blumenthal T."/>
            <person name="Brent M.R."/>
            <person name="Chen N."/>
            <person name="Chinwalla A."/>
            <person name="Clarke L."/>
            <person name="Clee C."/>
            <person name="Coghlan A."/>
            <person name="Coulson A."/>
            <person name="D'Eustachio P."/>
            <person name="Fitch D.H.A."/>
            <person name="Fulton L.A."/>
            <person name="Fulton R.E."/>
            <person name="Griffiths-Jones S."/>
            <person name="Harris T.W."/>
            <person name="Hillier L.W."/>
            <person name="Kamath R."/>
            <person name="Kuwabara P.E."/>
            <person name="Mardis E.R."/>
            <person name="Marra M.A."/>
            <person name="Miner T.L."/>
            <person name="Minx P."/>
            <person name="Mullikin J.C."/>
            <person name="Plumb R.W."/>
            <person name="Rogers J."/>
            <person name="Schein J.E."/>
            <person name="Sohrmann M."/>
            <person name="Spieth J."/>
            <person name="Stajich J.E."/>
            <person name="Wei C."/>
            <person name="Willey D."/>
            <person name="Wilson R.K."/>
            <person name="Durbin R.M."/>
            <person name="Waterston R.H."/>
        </authorList>
    </citation>
    <scope>NUCLEOTIDE SEQUENCE [LARGE SCALE GENOMIC DNA]</scope>
    <source>
        <strain>AF16</strain>
    </source>
</reference>
<dbReference type="EC" id="2.1.1.-"/>
<dbReference type="EMBL" id="HE600980">
    <property type="protein sequence ID" value="CAP32349.1"/>
    <property type="molecule type" value="Genomic_DNA"/>
</dbReference>
<dbReference type="SMR" id="A8XI75"/>
<dbReference type="FunCoup" id="A8XI75">
    <property type="interactions" value="1074"/>
</dbReference>
<dbReference type="STRING" id="6238.A8XI75"/>
<dbReference type="EnsemblMetazoa" id="CBG13569.1">
    <property type="protein sequence ID" value="CBG13569.1"/>
    <property type="gene ID" value="WBGene00034319"/>
</dbReference>
<dbReference type="KEGG" id="cbr:CBG_13569"/>
<dbReference type="CTD" id="8577020"/>
<dbReference type="WormBase" id="CBG13569">
    <property type="protein sequence ID" value="CBP17827"/>
    <property type="gene ID" value="WBGene00034319"/>
    <property type="gene designation" value="Cbr-set-23"/>
</dbReference>
<dbReference type="eggNOG" id="KOG1082">
    <property type="taxonomic scope" value="Eukaryota"/>
</dbReference>
<dbReference type="HOGENOM" id="CLU_020840_3_3_1"/>
<dbReference type="InParanoid" id="A8XI75"/>
<dbReference type="OMA" id="VDSMVPK"/>
<dbReference type="OrthoDB" id="616263at2759"/>
<dbReference type="Proteomes" id="UP000008549">
    <property type="component" value="Unassembled WGS sequence"/>
</dbReference>
<dbReference type="GO" id="GO:0005694">
    <property type="term" value="C:chromosome"/>
    <property type="evidence" value="ECO:0007669"/>
    <property type="project" value="UniProtKB-SubCell"/>
</dbReference>
<dbReference type="GO" id="GO:0005634">
    <property type="term" value="C:nucleus"/>
    <property type="evidence" value="ECO:0007669"/>
    <property type="project" value="UniProtKB-SubCell"/>
</dbReference>
<dbReference type="GO" id="GO:0003690">
    <property type="term" value="F:double-stranded DNA binding"/>
    <property type="evidence" value="ECO:0000318"/>
    <property type="project" value="GO_Central"/>
</dbReference>
<dbReference type="GO" id="GO:0042054">
    <property type="term" value="F:histone methyltransferase activity"/>
    <property type="evidence" value="ECO:0000318"/>
    <property type="project" value="GO_Central"/>
</dbReference>
<dbReference type="GO" id="GO:0008270">
    <property type="term" value="F:zinc ion binding"/>
    <property type="evidence" value="ECO:0007669"/>
    <property type="project" value="InterPro"/>
</dbReference>
<dbReference type="GO" id="GO:0032259">
    <property type="term" value="P:methylation"/>
    <property type="evidence" value="ECO:0007669"/>
    <property type="project" value="UniProtKB-KW"/>
</dbReference>
<dbReference type="Gene3D" id="2.170.270.10">
    <property type="entry name" value="SET domain"/>
    <property type="match status" value="1"/>
</dbReference>
<dbReference type="InterPro" id="IPR050973">
    <property type="entry name" value="H3K9_Histone-Lys_N-MTase"/>
</dbReference>
<dbReference type="InterPro" id="IPR003616">
    <property type="entry name" value="Post-SET_dom"/>
</dbReference>
<dbReference type="InterPro" id="IPR007728">
    <property type="entry name" value="Pre-SET_dom"/>
</dbReference>
<dbReference type="InterPro" id="IPR001214">
    <property type="entry name" value="SET_dom"/>
</dbReference>
<dbReference type="InterPro" id="IPR046341">
    <property type="entry name" value="SET_dom_sf"/>
</dbReference>
<dbReference type="PANTHER" id="PTHR46223:SF3">
    <property type="entry name" value="HISTONE-LYSINE N-METHYLTRANSFERASE SET-23"/>
    <property type="match status" value="1"/>
</dbReference>
<dbReference type="PANTHER" id="PTHR46223">
    <property type="entry name" value="HISTONE-LYSINE N-METHYLTRANSFERASE SUV39H"/>
    <property type="match status" value="1"/>
</dbReference>
<dbReference type="Pfam" id="PF00856">
    <property type="entry name" value="SET"/>
    <property type="match status" value="1"/>
</dbReference>
<dbReference type="SMART" id="SM00317">
    <property type="entry name" value="SET"/>
    <property type="match status" value="1"/>
</dbReference>
<dbReference type="SUPFAM" id="SSF82199">
    <property type="entry name" value="SET domain"/>
    <property type="match status" value="1"/>
</dbReference>
<dbReference type="PROSITE" id="PS50868">
    <property type="entry name" value="POST_SET"/>
    <property type="match status" value="1"/>
</dbReference>
<dbReference type="PROSITE" id="PS50867">
    <property type="entry name" value="PRE_SET"/>
    <property type="match status" value="1"/>
</dbReference>
<dbReference type="PROSITE" id="PS50280">
    <property type="entry name" value="SET"/>
    <property type="match status" value="1"/>
</dbReference>
<accession>A8XI75</accession>
<sequence>MNYEEITTTIPGPGVSQDDWNDEFQGCDCETQCSIENQCSCMTGATDNYSEDGRIVATSLLIECSTNCACCLLPYSCRNKVVQNGIKKKLKIFSTSEKGDGVLAEEPIQNREFVCEYAGECIGDQEVKRRCEVFKEEDNYTLTLKEHFGEKEVKTFIDPRLRGNIGRFLNHSCDPNCEIFVVRLGRMIPIAAIFAKREISVGEELSYDYGVSGIDGDNRKLCLCRSENCRKYLPMSVSPIE</sequence>
<gene>
    <name evidence="9" type="primary">set-23</name>
    <name type="ORF">CBG13569</name>
</gene>
<proteinExistence type="inferred from homology"/>
<keyword id="KW-0156">Chromatin regulator</keyword>
<keyword id="KW-0158">Chromosome</keyword>
<keyword id="KW-0479">Metal-binding</keyword>
<keyword id="KW-0489">Methyltransferase</keyword>
<keyword id="KW-0539">Nucleus</keyword>
<keyword id="KW-1185">Reference proteome</keyword>
<keyword id="KW-0949">S-adenosyl-L-methionine</keyword>
<keyword id="KW-0808">Transferase</keyword>
<keyword id="KW-0862">Zinc</keyword>
<protein>
    <recommendedName>
        <fullName>Probable histone-lysine N-methyltransferase set-23</fullName>
        <ecNumber>2.1.1.-</ecNumber>
    </recommendedName>
    <alternativeName>
        <fullName evidence="2">SET-domain containing protein 23</fullName>
    </alternativeName>
</protein>
<comment type="function">
    <text evidence="1">Probable histone methyltransferase required for embryonic development.</text>
</comment>
<comment type="catalytic activity">
    <reaction evidence="7">
        <text>L-lysyl-[histone] + S-adenosyl-L-methionine = N(6)-methyl-L-lysyl-[histone] + S-adenosyl-L-homocysteine + H(+)</text>
        <dbReference type="Rhea" id="RHEA:10024"/>
        <dbReference type="Rhea" id="RHEA-COMP:9845"/>
        <dbReference type="Rhea" id="RHEA-COMP:9846"/>
        <dbReference type="ChEBI" id="CHEBI:15378"/>
        <dbReference type="ChEBI" id="CHEBI:29969"/>
        <dbReference type="ChEBI" id="CHEBI:57856"/>
        <dbReference type="ChEBI" id="CHEBI:59789"/>
        <dbReference type="ChEBI" id="CHEBI:61929"/>
    </reaction>
</comment>
<comment type="subcellular location">
    <subcellularLocation>
        <location evidence="3">Nucleus</location>
    </subcellularLocation>
    <subcellularLocation>
        <location evidence="1">Chromosome</location>
    </subcellularLocation>
</comment>
<comment type="domain">
    <text evidence="1">In the pre-SET domain, Cys residues bind 3 zinc ions that are arranged in a triangular cluster; some of these Cys residues contribute to the binding of two zinc ions within the cluster.</text>
</comment>
<comment type="similarity">
    <text evidence="6">Belongs to the class V-like SAM-binding methyltransferase superfamily. Histone-lysine methyltransferase family. Suvar3-9 subfamily.</text>
</comment>